<organism>
    <name type="scientific">Ralstonia nicotianae (strain ATCC BAA-1114 / GMI1000)</name>
    <name type="common">Ralstonia solanacearum</name>
    <dbReference type="NCBI Taxonomy" id="267608"/>
    <lineage>
        <taxon>Bacteria</taxon>
        <taxon>Pseudomonadati</taxon>
        <taxon>Pseudomonadota</taxon>
        <taxon>Betaproteobacteria</taxon>
        <taxon>Burkholderiales</taxon>
        <taxon>Burkholderiaceae</taxon>
        <taxon>Ralstonia</taxon>
        <taxon>Ralstonia solanacearum species complex</taxon>
    </lineage>
</organism>
<protein>
    <recommendedName>
        <fullName evidence="1">Transcription elongation factor GreA</fullName>
    </recommendedName>
    <alternativeName>
        <fullName evidence="1">Transcript cleavage factor GreA</fullName>
    </alternativeName>
</protein>
<comment type="function">
    <text evidence="1">Necessary for efficient RNA polymerase transcription elongation past template-encoded arresting sites. The arresting sites in DNA have the property of trapping a certain fraction of elongating RNA polymerases that pass through, resulting in locked ternary complexes. Cleavage of the nascent transcript by cleavage factors such as GreA or GreB allows the resumption of elongation from the new 3'terminus. GreA releases sequences of 2 to 3 nucleotides.</text>
</comment>
<comment type="similarity">
    <text evidence="1">Belongs to the GreA/GreB family.</text>
</comment>
<sequence length="158" mass="16976">MSTIPITKRGAEMLKDELQRLKTKERPAVVNAIAEARAQGDLSENADYDAAKERQGFIEGRILEIESKLAAAQVIDPAGLDADGRIVFGATIDLEDLDSGKPVTYQIVGDDEADLDSGKISISSPIARALIGKYEGDVATVVAPGGEREYEVRAVKYL</sequence>
<proteinExistence type="inferred from homology"/>
<reference key="1">
    <citation type="journal article" date="2002" name="Nature">
        <title>Genome sequence of the plant pathogen Ralstonia solanacearum.</title>
        <authorList>
            <person name="Salanoubat M."/>
            <person name="Genin S."/>
            <person name="Artiguenave F."/>
            <person name="Gouzy J."/>
            <person name="Mangenot S."/>
            <person name="Arlat M."/>
            <person name="Billault A."/>
            <person name="Brottier P."/>
            <person name="Camus J.-C."/>
            <person name="Cattolico L."/>
            <person name="Chandler M."/>
            <person name="Choisne N."/>
            <person name="Claudel-Renard C."/>
            <person name="Cunnac S."/>
            <person name="Demange N."/>
            <person name="Gaspin C."/>
            <person name="Lavie M."/>
            <person name="Moisan A."/>
            <person name="Robert C."/>
            <person name="Saurin W."/>
            <person name="Schiex T."/>
            <person name="Siguier P."/>
            <person name="Thebault P."/>
            <person name="Whalen M."/>
            <person name="Wincker P."/>
            <person name="Levy M."/>
            <person name="Weissenbach J."/>
            <person name="Boucher C.A."/>
        </authorList>
    </citation>
    <scope>NUCLEOTIDE SEQUENCE [LARGE SCALE GENOMIC DNA]</scope>
    <source>
        <strain>ATCC BAA-1114 / GMI1000</strain>
    </source>
</reference>
<feature type="chain" id="PRO_0000176958" description="Transcription elongation factor GreA">
    <location>
        <begin position="1"/>
        <end position="158"/>
    </location>
</feature>
<name>GREA_RALN1</name>
<keyword id="KW-0238">DNA-binding</keyword>
<keyword id="KW-1185">Reference proteome</keyword>
<keyword id="KW-0804">Transcription</keyword>
<keyword id="KW-0805">Transcription regulation</keyword>
<dbReference type="EMBL" id="AL646052">
    <property type="protein sequence ID" value="CAD15224.1"/>
    <property type="molecule type" value="Genomic_DNA"/>
</dbReference>
<dbReference type="RefSeq" id="WP_011001469.1">
    <property type="nucleotide sequence ID" value="NC_003295.1"/>
</dbReference>
<dbReference type="SMR" id="Q8XZ82"/>
<dbReference type="STRING" id="267608.RSc1522"/>
<dbReference type="EnsemblBacteria" id="CAD15224">
    <property type="protein sequence ID" value="CAD15224"/>
    <property type="gene ID" value="RSc1522"/>
</dbReference>
<dbReference type="GeneID" id="93852947"/>
<dbReference type="KEGG" id="rso:RSc1522"/>
<dbReference type="eggNOG" id="COG0782">
    <property type="taxonomic scope" value="Bacteria"/>
</dbReference>
<dbReference type="HOGENOM" id="CLU_101379_2_0_4"/>
<dbReference type="Proteomes" id="UP000001436">
    <property type="component" value="Chromosome"/>
</dbReference>
<dbReference type="GO" id="GO:0003677">
    <property type="term" value="F:DNA binding"/>
    <property type="evidence" value="ECO:0007669"/>
    <property type="project" value="UniProtKB-UniRule"/>
</dbReference>
<dbReference type="GO" id="GO:0070063">
    <property type="term" value="F:RNA polymerase binding"/>
    <property type="evidence" value="ECO:0007669"/>
    <property type="project" value="InterPro"/>
</dbReference>
<dbReference type="GO" id="GO:0006354">
    <property type="term" value="P:DNA-templated transcription elongation"/>
    <property type="evidence" value="ECO:0007669"/>
    <property type="project" value="TreeGrafter"/>
</dbReference>
<dbReference type="GO" id="GO:0032784">
    <property type="term" value="P:regulation of DNA-templated transcription elongation"/>
    <property type="evidence" value="ECO:0007669"/>
    <property type="project" value="UniProtKB-UniRule"/>
</dbReference>
<dbReference type="FunFam" id="1.10.287.180:FF:000001">
    <property type="entry name" value="Transcription elongation factor GreA"/>
    <property type="match status" value="1"/>
</dbReference>
<dbReference type="FunFam" id="3.10.50.30:FF:000001">
    <property type="entry name" value="Transcription elongation factor GreA"/>
    <property type="match status" value="1"/>
</dbReference>
<dbReference type="Gene3D" id="3.10.50.30">
    <property type="entry name" value="Transcription elongation factor, GreA/GreB, C-terminal domain"/>
    <property type="match status" value="1"/>
</dbReference>
<dbReference type="Gene3D" id="1.10.287.180">
    <property type="entry name" value="Transcription elongation factor, GreA/GreB, N-terminal domain"/>
    <property type="match status" value="1"/>
</dbReference>
<dbReference type="HAMAP" id="MF_00105">
    <property type="entry name" value="GreA_GreB"/>
    <property type="match status" value="1"/>
</dbReference>
<dbReference type="InterPro" id="IPR036953">
    <property type="entry name" value="GreA/GreB_C_sf"/>
</dbReference>
<dbReference type="InterPro" id="IPR018151">
    <property type="entry name" value="TF_GreA/GreB_CS"/>
</dbReference>
<dbReference type="InterPro" id="IPR006359">
    <property type="entry name" value="Tscrpt_elong_fac_GreA"/>
</dbReference>
<dbReference type="InterPro" id="IPR028624">
    <property type="entry name" value="Tscrpt_elong_fac_GreA/B"/>
</dbReference>
<dbReference type="InterPro" id="IPR001437">
    <property type="entry name" value="Tscrpt_elong_fac_GreA/B_C"/>
</dbReference>
<dbReference type="InterPro" id="IPR023459">
    <property type="entry name" value="Tscrpt_elong_fac_GreA/B_fam"/>
</dbReference>
<dbReference type="InterPro" id="IPR022691">
    <property type="entry name" value="Tscrpt_elong_fac_GreA/B_N"/>
</dbReference>
<dbReference type="InterPro" id="IPR036805">
    <property type="entry name" value="Tscrpt_elong_fac_GreA/B_N_sf"/>
</dbReference>
<dbReference type="NCBIfam" id="TIGR01462">
    <property type="entry name" value="greA"/>
    <property type="match status" value="1"/>
</dbReference>
<dbReference type="NCBIfam" id="NF001261">
    <property type="entry name" value="PRK00226.1-2"/>
    <property type="match status" value="1"/>
</dbReference>
<dbReference type="NCBIfam" id="NF001263">
    <property type="entry name" value="PRK00226.1-4"/>
    <property type="match status" value="1"/>
</dbReference>
<dbReference type="NCBIfam" id="NF001264">
    <property type="entry name" value="PRK00226.1-5"/>
    <property type="match status" value="1"/>
</dbReference>
<dbReference type="PANTHER" id="PTHR30437">
    <property type="entry name" value="TRANSCRIPTION ELONGATION FACTOR GREA"/>
    <property type="match status" value="1"/>
</dbReference>
<dbReference type="PANTHER" id="PTHR30437:SF4">
    <property type="entry name" value="TRANSCRIPTION ELONGATION FACTOR GREA"/>
    <property type="match status" value="1"/>
</dbReference>
<dbReference type="Pfam" id="PF01272">
    <property type="entry name" value="GreA_GreB"/>
    <property type="match status" value="1"/>
</dbReference>
<dbReference type="Pfam" id="PF03449">
    <property type="entry name" value="GreA_GreB_N"/>
    <property type="match status" value="1"/>
</dbReference>
<dbReference type="PIRSF" id="PIRSF006092">
    <property type="entry name" value="GreA_GreB"/>
    <property type="match status" value="1"/>
</dbReference>
<dbReference type="SUPFAM" id="SSF54534">
    <property type="entry name" value="FKBP-like"/>
    <property type="match status" value="1"/>
</dbReference>
<dbReference type="SUPFAM" id="SSF46557">
    <property type="entry name" value="GreA transcript cleavage protein, N-terminal domain"/>
    <property type="match status" value="1"/>
</dbReference>
<dbReference type="PROSITE" id="PS00829">
    <property type="entry name" value="GREAB_1"/>
    <property type="match status" value="1"/>
</dbReference>
<dbReference type="PROSITE" id="PS00830">
    <property type="entry name" value="GREAB_2"/>
    <property type="match status" value="1"/>
</dbReference>
<gene>
    <name evidence="1" type="primary">greA</name>
    <name type="ordered locus">RSc1522</name>
    <name type="ORF">RS03782</name>
</gene>
<evidence type="ECO:0000255" key="1">
    <source>
        <dbReference type="HAMAP-Rule" id="MF_00105"/>
    </source>
</evidence>
<accession>Q8XZ82</accession>